<name>RS14_ROSDO</name>
<accession>Q16AD1</accession>
<evidence type="ECO:0000255" key="1">
    <source>
        <dbReference type="HAMAP-Rule" id="MF_00537"/>
    </source>
</evidence>
<evidence type="ECO:0000305" key="2"/>
<sequence length="101" mass="11609">MAKKSMVAREKKREALVAKYAAKRAELKEIINNKELEMEERFRASLKLAKLPRNSSAVRLHNRCQLTGRPHAYYRKLKISRIALRDLGSSGQIPGMVKSSW</sequence>
<reference key="1">
    <citation type="journal article" date="2007" name="J. Bacteriol.">
        <title>The complete genome sequence of Roseobacter denitrificans reveals a mixotrophic rather than photosynthetic metabolism.</title>
        <authorList>
            <person name="Swingley W.D."/>
            <person name="Sadekar S."/>
            <person name="Mastrian S.D."/>
            <person name="Matthies H.J."/>
            <person name="Hao J."/>
            <person name="Ramos H."/>
            <person name="Acharya C.R."/>
            <person name="Conrad A.L."/>
            <person name="Taylor H.L."/>
            <person name="Dejesa L.C."/>
            <person name="Shah M.K."/>
            <person name="O'Huallachain M.E."/>
            <person name="Lince M.T."/>
            <person name="Blankenship R.E."/>
            <person name="Beatty J.T."/>
            <person name="Touchman J.W."/>
        </authorList>
    </citation>
    <scope>NUCLEOTIDE SEQUENCE [LARGE SCALE GENOMIC DNA]</scope>
    <source>
        <strain>ATCC 33942 / OCh 114</strain>
    </source>
</reference>
<comment type="function">
    <text evidence="1">Binds 16S rRNA, required for the assembly of 30S particles and may also be responsible for determining the conformation of the 16S rRNA at the A site.</text>
</comment>
<comment type="subunit">
    <text evidence="1">Part of the 30S ribosomal subunit. Contacts proteins S3 and S10.</text>
</comment>
<comment type="similarity">
    <text evidence="1">Belongs to the universal ribosomal protein uS14 family.</text>
</comment>
<feature type="chain" id="PRO_1000128551" description="Small ribosomal subunit protein uS14">
    <location>
        <begin position="1"/>
        <end position="101"/>
    </location>
</feature>
<dbReference type="EMBL" id="CP000362">
    <property type="protein sequence ID" value="ABG31062.1"/>
    <property type="molecule type" value="Genomic_DNA"/>
</dbReference>
<dbReference type="RefSeq" id="WP_011567682.1">
    <property type="nucleotide sequence ID" value="NC_008209.1"/>
</dbReference>
<dbReference type="SMR" id="Q16AD1"/>
<dbReference type="STRING" id="375451.RD1_1423"/>
<dbReference type="KEGG" id="rde:RD1_1423"/>
<dbReference type="eggNOG" id="COG0199">
    <property type="taxonomic scope" value="Bacteria"/>
</dbReference>
<dbReference type="HOGENOM" id="CLU_139869_0_1_5"/>
<dbReference type="OrthoDB" id="9810484at2"/>
<dbReference type="Proteomes" id="UP000007029">
    <property type="component" value="Chromosome"/>
</dbReference>
<dbReference type="GO" id="GO:0005737">
    <property type="term" value="C:cytoplasm"/>
    <property type="evidence" value="ECO:0007669"/>
    <property type="project" value="UniProtKB-ARBA"/>
</dbReference>
<dbReference type="GO" id="GO:0015935">
    <property type="term" value="C:small ribosomal subunit"/>
    <property type="evidence" value="ECO:0007669"/>
    <property type="project" value="TreeGrafter"/>
</dbReference>
<dbReference type="GO" id="GO:0019843">
    <property type="term" value="F:rRNA binding"/>
    <property type="evidence" value="ECO:0007669"/>
    <property type="project" value="UniProtKB-UniRule"/>
</dbReference>
<dbReference type="GO" id="GO:0003735">
    <property type="term" value="F:structural constituent of ribosome"/>
    <property type="evidence" value="ECO:0007669"/>
    <property type="project" value="InterPro"/>
</dbReference>
<dbReference type="GO" id="GO:0006412">
    <property type="term" value="P:translation"/>
    <property type="evidence" value="ECO:0007669"/>
    <property type="project" value="UniProtKB-UniRule"/>
</dbReference>
<dbReference type="FunFam" id="1.10.287.1480:FF:000001">
    <property type="entry name" value="30S ribosomal protein S14"/>
    <property type="match status" value="1"/>
</dbReference>
<dbReference type="Gene3D" id="1.10.287.1480">
    <property type="match status" value="1"/>
</dbReference>
<dbReference type="HAMAP" id="MF_00537">
    <property type="entry name" value="Ribosomal_uS14_1"/>
    <property type="match status" value="1"/>
</dbReference>
<dbReference type="InterPro" id="IPR001209">
    <property type="entry name" value="Ribosomal_uS14"/>
</dbReference>
<dbReference type="InterPro" id="IPR023036">
    <property type="entry name" value="Ribosomal_uS14_bac/plastid"/>
</dbReference>
<dbReference type="InterPro" id="IPR018271">
    <property type="entry name" value="Ribosomal_uS14_CS"/>
</dbReference>
<dbReference type="NCBIfam" id="NF006477">
    <property type="entry name" value="PRK08881.1"/>
    <property type="match status" value="1"/>
</dbReference>
<dbReference type="PANTHER" id="PTHR19836">
    <property type="entry name" value="30S RIBOSOMAL PROTEIN S14"/>
    <property type="match status" value="1"/>
</dbReference>
<dbReference type="PANTHER" id="PTHR19836:SF19">
    <property type="entry name" value="SMALL RIBOSOMAL SUBUNIT PROTEIN US14M"/>
    <property type="match status" value="1"/>
</dbReference>
<dbReference type="Pfam" id="PF00253">
    <property type="entry name" value="Ribosomal_S14"/>
    <property type="match status" value="1"/>
</dbReference>
<dbReference type="SUPFAM" id="SSF57716">
    <property type="entry name" value="Glucocorticoid receptor-like (DNA-binding domain)"/>
    <property type="match status" value="1"/>
</dbReference>
<dbReference type="PROSITE" id="PS00527">
    <property type="entry name" value="RIBOSOMAL_S14"/>
    <property type="match status" value="1"/>
</dbReference>
<keyword id="KW-1185">Reference proteome</keyword>
<keyword id="KW-0687">Ribonucleoprotein</keyword>
<keyword id="KW-0689">Ribosomal protein</keyword>
<keyword id="KW-0694">RNA-binding</keyword>
<keyword id="KW-0699">rRNA-binding</keyword>
<organism>
    <name type="scientific">Roseobacter denitrificans (strain ATCC 33942 / OCh 114)</name>
    <name type="common">Erythrobacter sp. (strain OCh 114)</name>
    <name type="synonym">Roseobacter denitrificans</name>
    <dbReference type="NCBI Taxonomy" id="375451"/>
    <lineage>
        <taxon>Bacteria</taxon>
        <taxon>Pseudomonadati</taxon>
        <taxon>Pseudomonadota</taxon>
        <taxon>Alphaproteobacteria</taxon>
        <taxon>Rhodobacterales</taxon>
        <taxon>Roseobacteraceae</taxon>
        <taxon>Roseobacter</taxon>
    </lineage>
</organism>
<gene>
    <name evidence="1" type="primary">rpsN</name>
    <name type="ordered locus">RD1_1423</name>
</gene>
<protein>
    <recommendedName>
        <fullName evidence="1">Small ribosomal subunit protein uS14</fullName>
    </recommendedName>
    <alternativeName>
        <fullName evidence="2">30S ribosomal protein S14</fullName>
    </alternativeName>
</protein>
<proteinExistence type="inferred from homology"/>